<keyword id="KW-1185">Reference proteome</keyword>
<keyword id="KW-0687">Ribonucleoprotein</keyword>
<keyword id="KW-0689">Ribosomal protein</keyword>
<keyword id="KW-0694">RNA-binding</keyword>
<keyword id="KW-0699">rRNA-binding</keyword>
<sequence>MARINYSINGDPETTSKAMGSELHISPKKSREVCCKIKGMKASEARKFLEDVIAMKQAVPFKKHHDGSGHRKGPMAAGKYPISASKEILKVLKNAESNAEYKGLEPANMYIIHAAIQRGRVIHGFMPRARGRATPKDTETVNIEMILSEVR</sequence>
<protein>
    <recommendedName>
        <fullName evidence="1">Large ribosomal subunit protein uL22</fullName>
    </recommendedName>
    <alternativeName>
        <fullName evidence="3">50S ribosomal protein L22</fullName>
    </alternativeName>
</protein>
<reference key="1">
    <citation type="journal article" date="2002" name="Genome Res.">
        <title>The genome of Methanosarcina acetivorans reveals extensive metabolic and physiological diversity.</title>
        <authorList>
            <person name="Galagan J.E."/>
            <person name="Nusbaum C."/>
            <person name="Roy A."/>
            <person name="Endrizzi M.G."/>
            <person name="Macdonald P."/>
            <person name="FitzHugh W."/>
            <person name="Calvo S."/>
            <person name="Engels R."/>
            <person name="Smirnov S."/>
            <person name="Atnoor D."/>
            <person name="Brown A."/>
            <person name="Allen N."/>
            <person name="Naylor J."/>
            <person name="Stange-Thomann N."/>
            <person name="DeArellano K."/>
            <person name="Johnson R."/>
            <person name="Linton L."/>
            <person name="McEwan P."/>
            <person name="McKernan K."/>
            <person name="Talamas J."/>
            <person name="Tirrell A."/>
            <person name="Ye W."/>
            <person name="Zimmer A."/>
            <person name="Barber R.D."/>
            <person name="Cann I."/>
            <person name="Graham D.E."/>
            <person name="Grahame D.A."/>
            <person name="Guss A.M."/>
            <person name="Hedderich R."/>
            <person name="Ingram-Smith C."/>
            <person name="Kuettner H.C."/>
            <person name="Krzycki J.A."/>
            <person name="Leigh J.A."/>
            <person name="Li W."/>
            <person name="Liu J."/>
            <person name="Mukhopadhyay B."/>
            <person name="Reeve J.N."/>
            <person name="Smith K."/>
            <person name="Springer T.A."/>
            <person name="Umayam L.A."/>
            <person name="White O."/>
            <person name="White R.H."/>
            <person name="de Macario E.C."/>
            <person name="Ferry J.G."/>
            <person name="Jarrell K.F."/>
            <person name="Jing H."/>
            <person name="Macario A.J.L."/>
            <person name="Paulsen I.T."/>
            <person name="Pritchett M."/>
            <person name="Sowers K.R."/>
            <person name="Swanson R.V."/>
            <person name="Zinder S.H."/>
            <person name="Lander E."/>
            <person name="Metcalf W.W."/>
            <person name="Birren B."/>
        </authorList>
    </citation>
    <scope>NUCLEOTIDE SEQUENCE [LARGE SCALE GENOMIC DNA]</scope>
    <source>
        <strain>ATCC 35395 / DSM 2834 / JCM 12185 / C2A</strain>
    </source>
</reference>
<gene>
    <name evidence="1" type="primary">rpl22</name>
    <name type="ordered locus">MA_1077</name>
</gene>
<evidence type="ECO:0000255" key="1">
    <source>
        <dbReference type="HAMAP-Rule" id="MF_01331"/>
    </source>
</evidence>
<evidence type="ECO:0000256" key="2">
    <source>
        <dbReference type="SAM" id="MobiDB-lite"/>
    </source>
</evidence>
<evidence type="ECO:0000305" key="3"/>
<feature type="chain" id="PRO_0000125274" description="Large ribosomal subunit protein uL22">
    <location>
        <begin position="1"/>
        <end position="151"/>
    </location>
</feature>
<feature type="region of interest" description="Disordered" evidence="2">
    <location>
        <begin position="1"/>
        <end position="23"/>
    </location>
</feature>
<feature type="compositionally biased region" description="Polar residues" evidence="2">
    <location>
        <begin position="1"/>
        <end position="18"/>
    </location>
</feature>
<name>RL22_METAC</name>
<dbReference type="EMBL" id="AE010299">
    <property type="protein sequence ID" value="AAM04502.1"/>
    <property type="molecule type" value="Genomic_DNA"/>
</dbReference>
<dbReference type="RefSeq" id="WP_011021106.1">
    <property type="nucleotide sequence ID" value="NC_003552.1"/>
</dbReference>
<dbReference type="SMR" id="Q8TRU2"/>
<dbReference type="FunCoup" id="Q8TRU2">
    <property type="interactions" value="186"/>
</dbReference>
<dbReference type="STRING" id="188937.MA_1077"/>
<dbReference type="EnsemblBacteria" id="AAM04502">
    <property type="protein sequence ID" value="AAM04502"/>
    <property type="gene ID" value="MA_1077"/>
</dbReference>
<dbReference type="GeneID" id="1472967"/>
<dbReference type="KEGG" id="mac:MA_1077"/>
<dbReference type="HOGENOM" id="CLU_083987_0_2_2"/>
<dbReference type="InParanoid" id="Q8TRU2"/>
<dbReference type="OrthoDB" id="314984at2157"/>
<dbReference type="PhylomeDB" id="Q8TRU2"/>
<dbReference type="Proteomes" id="UP000002487">
    <property type="component" value="Chromosome"/>
</dbReference>
<dbReference type="GO" id="GO:0022625">
    <property type="term" value="C:cytosolic large ribosomal subunit"/>
    <property type="evidence" value="ECO:0000318"/>
    <property type="project" value="GO_Central"/>
</dbReference>
<dbReference type="GO" id="GO:0019843">
    <property type="term" value="F:rRNA binding"/>
    <property type="evidence" value="ECO:0007669"/>
    <property type="project" value="UniProtKB-UniRule"/>
</dbReference>
<dbReference type="GO" id="GO:0003735">
    <property type="term" value="F:structural constituent of ribosome"/>
    <property type="evidence" value="ECO:0000318"/>
    <property type="project" value="GO_Central"/>
</dbReference>
<dbReference type="GO" id="GO:0002181">
    <property type="term" value="P:cytoplasmic translation"/>
    <property type="evidence" value="ECO:0000318"/>
    <property type="project" value="GO_Central"/>
</dbReference>
<dbReference type="CDD" id="cd00336">
    <property type="entry name" value="Ribosomal_L22"/>
    <property type="match status" value="1"/>
</dbReference>
<dbReference type="FunFam" id="3.90.470.10:FF:000015">
    <property type="entry name" value="50S ribosomal protein L22"/>
    <property type="match status" value="1"/>
</dbReference>
<dbReference type="Gene3D" id="3.90.470.10">
    <property type="entry name" value="Ribosomal protein L22/L17"/>
    <property type="match status" value="1"/>
</dbReference>
<dbReference type="HAMAP" id="MF_01331_A">
    <property type="entry name" value="Ribosomal_uL22_A"/>
    <property type="match status" value="1"/>
</dbReference>
<dbReference type="InterPro" id="IPR001063">
    <property type="entry name" value="Ribosomal_uL22"/>
</dbReference>
<dbReference type="InterPro" id="IPR005721">
    <property type="entry name" value="Ribosomal_uL22_euk/arc"/>
</dbReference>
<dbReference type="InterPro" id="IPR036394">
    <property type="entry name" value="Ribosomal_uL22_sf"/>
</dbReference>
<dbReference type="NCBIfam" id="NF003260">
    <property type="entry name" value="PRK04223.1"/>
    <property type="match status" value="1"/>
</dbReference>
<dbReference type="NCBIfam" id="TIGR01038">
    <property type="entry name" value="uL22_arch_euk"/>
    <property type="match status" value="1"/>
</dbReference>
<dbReference type="PANTHER" id="PTHR11593">
    <property type="entry name" value="60S RIBOSOMAL PROTEIN L17"/>
    <property type="match status" value="1"/>
</dbReference>
<dbReference type="PANTHER" id="PTHR11593:SF10">
    <property type="entry name" value="60S RIBOSOMAL PROTEIN L17"/>
    <property type="match status" value="1"/>
</dbReference>
<dbReference type="Pfam" id="PF00237">
    <property type="entry name" value="Ribosomal_L22"/>
    <property type="match status" value="1"/>
</dbReference>
<dbReference type="SUPFAM" id="SSF54843">
    <property type="entry name" value="Ribosomal protein L22"/>
    <property type="match status" value="1"/>
</dbReference>
<comment type="function">
    <text evidence="1">This protein binds specifically to 23S rRNA. It makes multiple contacts with different domains of the 23S rRNA in the assembled 50S subunit and ribosome.</text>
</comment>
<comment type="function">
    <text evidence="1">The globular domain of the protein is located near the polypeptide exit tunnel on the outside of the subunit, while an extended beta-hairpin is found that lines the wall of the exit tunnel in the center of the 70S ribosome.</text>
</comment>
<comment type="subunit">
    <text evidence="1">Part of the 50S ribosomal subunit.</text>
</comment>
<comment type="similarity">
    <text evidence="1">Belongs to the universal ribosomal protein uL22 family.</text>
</comment>
<accession>Q8TRU2</accession>
<proteinExistence type="inferred from homology"/>
<organism>
    <name type="scientific">Methanosarcina acetivorans (strain ATCC 35395 / DSM 2834 / JCM 12185 / C2A)</name>
    <dbReference type="NCBI Taxonomy" id="188937"/>
    <lineage>
        <taxon>Archaea</taxon>
        <taxon>Methanobacteriati</taxon>
        <taxon>Methanobacteriota</taxon>
        <taxon>Stenosarchaea group</taxon>
        <taxon>Methanomicrobia</taxon>
        <taxon>Methanosarcinales</taxon>
        <taxon>Methanosarcinaceae</taxon>
        <taxon>Methanosarcina</taxon>
    </lineage>
</organism>